<protein>
    <recommendedName>
        <fullName evidence="1">Putative nickel-responsive regulator</fullName>
    </recommendedName>
</protein>
<feature type="chain" id="PRO_0000139311" description="Putative nickel-responsive regulator">
    <location>
        <begin position="1"/>
        <end position="138"/>
    </location>
</feature>
<feature type="binding site" evidence="1">
    <location>
        <position position="78"/>
    </location>
    <ligand>
        <name>Ni(2+)</name>
        <dbReference type="ChEBI" id="CHEBI:49786"/>
    </ligand>
</feature>
<feature type="binding site" evidence="1">
    <location>
        <position position="89"/>
    </location>
    <ligand>
        <name>Ni(2+)</name>
        <dbReference type="ChEBI" id="CHEBI:49786"/>
    </ligand>
</feature>
<feature type="binding site" evidence="1">
    <location>
        <position position="91"/>
    </location>
    <ligand>
        <name>Ni(2+)</name>
        <dbReference type="ChEBI" id="CHEBI:49786"/>
    </ligand>
</feature>
<feature type="binding site" evidence="1">
    <location>
        <position position="97"/>
    </location>
    <ligand>
        <name>Ni(2+)</name>
        <dbReference type="ChEBI" id="CHEBI:49786"/>
    </ligand>
</feature>
<reference key="1">
    <citation type="journal article" date="1999" name="Genetics">
        <title>Divergence of the hyperthermophilic archaea Pyrococcus furiosus and P. horikoshii inferred from complete genomic sequences.</title>
        <authorList>
            <person name="Maeder D.L."/>
            <person name="Weiss R.B."/>
            <person name="Dunn D.M."/>
            <person name="Cherry J.L."/>
            <person name="Gonzalez J.M."/>
            <person name="DiRuggiero J."/>
            <person name="Robb F.T."/>
        </authorList>
    </citation>
    <scope>NUCLEOTIDE SEQUENCE [LARGE SCALE GENOMIC DNA]</scope>
    <source>
        <strain>ATCC 43587 / DSM 3638 / JCM 8422 / Vc1</strain>
    </source>
</reference>
<name>NIKR_PYRFU</name>
<accession>Q8U3X9</accession>
<dbReference type="EMBL" id="AE009950">
    <property type="protein sequence ID" value="AAL80446.1"/>
    <property type="molecule type" value="Genomic_DNA"/>
</dbReference>
<dbReference type="SMR" id="Q8U3X9"/>
<dbReference type="STRING" id="186497.PF0322"/>
<dbReference type="PaxDb" id="186497-PF0322"/>
<dbReference type="KEGG" id="pfu:PF0322"/>
<dbReference type="PATRIC" id="fig|186497.12.peg.337"/>
<dbReference type="eggNOG" id="arCOG01008">
    <property type="taxonomic scope" value="Archaea"/>
</dbReference>
<dbReference type="HOGENOM" id="CLU_113319_1_2_2"/>
<dbReference type="OrthoDB" id="25654at2157"/>
<dbReference type="PhylomeDB" id="Q8U3X9"/>
<dbReference type="Proteomes" id="UP000001013">
    <property type="component" value="Chromosome"/>
</dbReference>
<dbReference type="GO" id="GO:0003677">
    <property type="term" value="F:DNA binding"/>
    <property type="evidence" value="ECO:0007669"/>
    <property type="project" value="UniProtKB-KW"/>
</dbReference>
<dbReference type="GO" id="GO:0003700">
    <property type="term" value="F:DNA-binding transcription factor activity"/>
    <property type="evidence" value="ECO:0007669"/>
    <property type="project" value="UniProtKB-UniRule"/>
</dbReference>
<dbReference type="GO" id="GO:0016151">
    <property type="term" value="F:nickel cation binding"/>
    <property type="evidence" value="ECO:0007669"/>
    <property type="project" value="UniProtKB-UniRule"/>
</dbReference>
<dbReference type="GO" id="GO:0010045">
    <property type="term" value="P:response to nickel cation"/>
    <property type="evidence" value="ECO:0007669"/>
    <property type="project" value="InterPro"/>
</dbReference>
<dbReference type="CDD" id="cd22231">
    <property type="entry name" value="RHH_NikR_HicB-like"/>
    <property type="match status" value="1"/>
</dbReference>
<dbReference type="Gene3D" id="3.30.70.1150">
    <property type="entry name" value="ACT-like. Chain A, domain 2"/>
    <property type="match status" value="1"/>
</dbReference>
<dbReference type="Gene3D" id="1.10.1220.10">
    <property type="entry name" value="Met repressor-like"/>
    <property type="match status" value="1"/>
</dbReference>
<dbReference type="HAMAP" id="MF_00476">
    <property type="entry name" value="NikR"/>
    <property type="match status" value="1"/>
</dbReference>
<dbReference type="InterPro" id="IPR027271">
    <property type="entry name" value="Acetolactate_synth/TF_NikR_C"/>
</dbReference>
<dbReference type="InterPro" id="IPR045865">
    <property type="entry name" value="ACT-like_dom_sf"/>
</dbReference>
<dbReference type="InterPro" id="IPR013321">
    <property type="entry name" value="Arc_rbn_hlx_hlx"/>
</dbReference>
<dbReference type="InterPro" id="IPR002145">
    <property type="entry name" value="CopG"/>
</dbReference>
<dbReference type="InterPro" id="IPR050192">
    <property type="entry name" value="CopG/NikR_regulator"/>
</dbReference>
<dbReference type="InterPro" id="IPR022988">
    <property type="entry name" value="Ni_resp_reg_NikR"/>
</dbReference>
<dbReference type="InterPro" id="IPR010985">
    <property type="entry name" value="Ribbon_hlx_hlx"/>
</dbReference>
<dbReference type="InterPro" id="IPR014864">
    <property type="entry name" value="TF_NikR_Ni-bd_C"/>
</dbReference>
<dbReference type="NCBIfam" id="NF001884">
    <property type="entry name" value="PRK00630.1"/>
    <property type="match status" value="1"/>
</dbReference>
<dbReference type="NCBIfam" id="NF002169">
    <property type="entry name" value="PRK01002.1"/>
    <property type="match status" value="1"/>
</dbReference>
<dbReference type="NCBIfam" id="NF002815">
    <property type="entry name" value="PRK02967.1"/>
    <property type="match status" value="1"/>
</dbReference>
<dbReference type="NCBIfam" id="NF003381">
    <property type="entry name" value="PRK04460.1"/>
    <property type="match status" value="1"/>
</dbReference>
<dbReference type="PANTHER" id="PTHR34719">
    <property type="entry name" value="NICKEL-RESPONSIVE REGULATOR"/>
    <property type="match status" value="1"/>
</dbReference>
<dbReference type="PANTHER" id="PTHR34719:SF2">
    <property type="entry name" value="NICKEL-RESPONSIVE REGULATOR"/>
    <property type="match status" value="1"/>
</dbReference>
<dbReference type="Pfam" id="PF08753">
    <property type="entry name" value="NikR_C"/>
    <property type="match status" value="1"/>
</dbReference>
<dbReference type="Pfam" id="PF01402">
    <property type="entry name" value="RHH_1"/>
    <property type="match status" value="1"/>
</dbReference>
<dbReference type="SUPFAM" id="SSF55021">
    <property type="entry name" value="ACT-like"/>
    <property type="match status" value="1"/>
</dbReference>
<dbReference type="SUPFAM" id="SSF47598">
    <property type="entry name" value="Ribbon-helix-helix"/>
    <property type="match status" value="1"/>
</dbReference>
<proteinExistence type="inferred from homology"/>
<keyword id="KW-0238">DNA-binding</keyword>
<keyword id="KW-0479">Metal-binding</keyword>
<keyword id="KW-0533">Nickel</keyword>
<keyword id="KW-1185">Reference proteome</keyword>
<keyword id="KW-0804">Transcription</keyword>
<keyword id="KW-0805">Transcription regulation</keyword>
<organism>
    <name type="scientific">Pyrococcus furiosus (strain ATCC 43587 / DSM 3638 / JCM 8422 / Vc1)</name>
    <dbReference type="NCBI Taxonomy" id="186497"/>
    <lineage>
        <taxon>Archaea</taxon>
        <taxon>Methanobacteriati</taxon>
        <taxon>Methanobacteriota</taxon>
        <taxon>Thermococci</taxon>
        <taxon>Thermococcales</taxon>
        <taxon>Thermococcaceae</taxon>
        <taxon>Pyrococcus</taxon>
    </lineage>
</organism>
<sequence length="138" mass="15772">MGIVRFGVSIPKELLEKFDGIIEEMGYTNRSEAIRDLIRDMVVRHEWQLGDEEVAGTITIVYNHDEADVVRELLDLQHEYLNEIVSSLHVHMDEHNCLEVIVVKGRAKKIKKIADRLLSLKGVKHGKLVMTTTGRDIV</sequence>
<evidence type="ECO:0000255" key="1">
    <source>
        <dbReference type="HAMAP-Rule" id="MF_00476"/>
    </source>
</evidence>
<comment type="function">
    <text evidence="1">Transcriptional regulator.</text>
</comment>
<comment type="cofactor">
    <cofactor evidence="1">
        <name>Ni(2+)</name>
        <dbReference type="ChEBI" id="CHEBI:49786"/>
    </cofactor>
    <text evidence="1">Binds 1 nickel ion per subunit.</text>
</comment>
<comment type="similarity">
    <text evidence="1">Belongs to the transcriptional regulatory CopG/NikR family.</text>
</comment>
<gene>
    <name type="ordered locus">PF0322</name>
</gene>